<accession>B9MJV0</accession>
<gene>
    <name evidence="1" type="primary">nrdR</name>
    <name type="ordered locus">Athe_1510</name>
</gene>
<protein>
    <recommendedName>
        <fullName evidence="1">Transcriptional repressor NrdR</fullName>
    </recommendedName>
</protein>
<reference key="1">
    <citation type="submission" date="2009-01" db="EMBL/GenBank/DDBJ databases">
        <title>Complete sequence of chromosome of Caldicellulosiruptor becscii DSM 6725.</title>
        <authorList>
            <person name="Lucas S."/>
            <person name="Copeland A."/>
            <person name="Lapidus A."/>
            <person name="Glavina del Rio T."/>
            <person name="Tice H."/>
            <person name="Bruce D."/>
            <person name="Goodwin L."/>
            <person name="Pitluck S."/>
            <person name="Sims D."/>
            <person name="Meincke L."/>
            <person name="Brettin T."/>
            <person name="Detter J.C."/>
            <person name="Han C."/>
            <person name="Larimer F."/>
            <person name="Land M."/>
            <person name="Hauser L."/>
            <person name="Kyrpides N."/>
            <person name="Ovchinnikova G."/>
            <person name="Kataeva I."/>
            <person name="Adams M.W.W."/>
        </authorList>
    </citation>
    <scope>NUCLEOTIDE SEQUENCE [LARGE SCALE GENOMIC DNA]</scope>
    <source>
        <strain>ATCC BAA-1888 / DSM 6725 / KCTC 15123 / Z-1320</strain>
    </source>
</reference>
<evidence type="ECO:0000255" key="1">
    <source>
        <dbReference type="HAMAP-Rule" id="MF_00440"/>
    </source>
</evidence>
<proteinExistence type="inferred from homology"/>
<comment type="function">
    <text evidence="1">Negatively regulates transcription of bacterial ribonucleotide reductase nrd genes and operons by binding to NrdR-boxes.</text>
</comment>
<comment type="cofactor">
    <cofactor evidence="1">
        <name>Zn(2+)</name>
        <dbReference type="ChEBI" id="CHEBI:29105"/>
    </cofactor>
    <text evidence="1">Binds 1 zinc ion.</text>
</comment>
<comment type="similarity">
    <text evidence="1">Belongs to the NrdR family.</text>
</comment>
<sequence>MRCPFCGYEDSKVVDTRPTNEGKTIKRRRECLKCQKRFTTYEKIEKQPILVIKKDNRREEFDRNKILNGIIKACQKRPVSIEQMNKIVDEIENEIYNSMREEISSREIGEMVMEKLKKIDEISYVRFASVYRQFKDINTFIEELQKLLTEKIE</sequence>
<name>NRDR_CALBD</name>
<organism>
    <name type="scientific">Caldicellulosiruptor bescii (strain ATCC BAA-1888 / DSM 6725 / KCTC 15123 / Z-1320)</name>
    <name type="common">Anaerocellum thermophilum</name>
    <dbReference type="NCBI Taxonomy" id="521460"/>
    <lineage>
        <taxon>Bacteria</taxon>
        <taxon>Bacillati</taxon>
        <taxon>Bacillota</taxon>
        <taxon>Bacillota incertae sedis</taxon>
        <taxon>Caldicellulosiruptorales</taxon>
        <taxon>Caldicellulosiruptoraceae</taxon>
        <taxon>Caldicellulosiruptor</taxon>
    </lineage>
</organism>
<dbReference type="EMBL" id="CP001393">
    <property type="protein sequence ID" value="ACM60608.1"/>
    <property type="molecule type" value="Genomic_DNA"/>
</dbReference>
<dbReference type="RefSeq" id="WP_013430173.1">
    <property type="nucleotide sequence ID" value="NC_012034.1"/>
</dbReference>
<dbReference type="SMR" id="B9MJV0"/>
<dbReference type="STRING" id="521460.Athe_1510"/>
<dbReference type="GeneID" id="31772855"/>
<dbReference type="KEGG" id="ate:Athe_1510"/>
<dbReference type="eggNOG" id="COG1327">
    <property type="taxonomic scope" value="Bacteria"/>
</dbReference>
<dbReference type="HOGENOM" id="CLU_108412_0_0_9"/>
<dbReference type="Proteomes" id="UP000007723">
    <property type="component" value="Chromosome"/>
</dbReference>
<dbReference type="GO" id="GO:0005524">
    <property type="term" value="F:ATP binding"/>
    <property type="evidence" value="ECO:0007669"/>
    <property type="project" value="UniProtKB-KW"/>
</dbReference>
<dbReference type="GO" id="GO:0003677">
    <property type="term" value="F:DNA binding"/>
    <property type="evidence" value="ECO:0007669"/>
    <property type="project" value="UniProtKB-KW"/>
</dbReference>
<dbReference type="GO" id="GO:0008270">
    <property type="term" value="F:zinc ion binding"/>
    <property type="evidence" value="ECO:0007669"/>
    <property type="project" value="UniProtKB-UniRule"/>
</dbReference>
<dbReference type="GO" id="GO:0045892">
    <property type="term" value="P:negative regulation of DNA-templated transcription"/>
    <property type="evidence" value="ECO:0007669"/>
    <property type="project" value="UniProtKB-UniRule"/>
</dbReference>
<dbReference type="HAMAP" id="MF_00440">
    <property type="entry name" value="NrdR"/>
    <property type="match status" value="1"/>
</dbReference>
<dbReference type="InterPro" id="IPR005144">
    <property type="entry name" value="ATP-cone_dom"/>
</dbReference>
<dbReference type="InterPro" id="IPR055173">
    <property type="entry name" value="NrdR-like_N"/>
</dbReference>
<dbReference type="InterPro" id="IPR003796">
    <property type="entry name" value="RNR_NrdR-like"/>
</dbReference>
<dbReference type="NCBIfam" id="TIGR00244">
    <property type="entry name" value="transcriptional regulator NrdR"/>
    <property type="match status" value="1"/>
</dbReference>
<dbReference type="PANTHER" id="PTHR30455">
    <property type="entry name" value="TRANSCRIPTIONAL REPRESSOR NRDR"/>
    <property type="match status" value="1"/>
</dbReference>
<dbReference type="PANTHER" id="PTHR30455:SF2">
    <property type="entry name" value="TRANSCRIPTIONAL REPRESSOR NRDR"/>
    <property type="match status" value="1"/>
</dbReference>
<dbReference type="Pfam" id="PF03477">
    <property type="entry name" value="ATP-cone"/>
    <property type="match status" value="1"/>
</dbReference>
<dbReference type="Pfam" id="PF22811">
    <property type="entry name" value="Zn_ribbon_NrdR"/>
    <property type="match status" value="1"/>
</dbReference>
<dbReference type="PROSITE" id="PS51161">
    <property type="entry name" value="ATP_CONE"/>
    <property type="match status" value="1"/>
</dbReference>
<keyword id="KW-0067">ATP-binding</keyword>
<keyword id="KW-0238">DNA-binding</keyword>
<keyword id="KW-0479">Metal-binding</keyword>
<keyword id="KW-0547">Nucleotide-binding</keyword>
<keyword id="KW-0678">Repressor</keyword>
<keyword id="KW-0804">Transcription</keyword>
<keyword id="KW-0805">Transcription regulation</keyword>
<keyword id="KW-0862">Zinc</keyword>
<keyword id="KW-0863">Zinc-finger</keyword>
<feature type="chain" id="PRO_1000191774" description="Transcriptional repressor NrdR">
    <location>
        <begin position="1"/>
        <end position="153"/>
    </location>
</feature>
<feature type="domain" description="ATP-cone" evidence="1">
    <location>
        <begin position="49"/>
        <end position="139"/>
    </location>
</feature>
<feature type="zinc finger region" evidence="1">
    <location>
        <begin position="3"/>
        <end position="34"/>
    </location>
</feature>